<proteinExistence type="inferred from homology"/>
<organism>
    <name type="scientific">Streptomyces avermitilis (strain ATCC 31267 / DSM 46492 / JCM 5070 / NBRC 14893 / NCIMB 12804 / NRRL 8165 / MA-4680)</name>
    <dbReference type="NCBI Taxonomy" id="227882"/>
    <lineage>
        <taxon>Bacteria</taxon>
        <taxon>Bacillati</taxon>
        <taxon>Actinomycetota</taxon>
        <taxon>Actinomycetes</taxon>
        <taxon>Kitasatosporales</taxon>
        <taxon>Streptomycetaceae</taxon>
        <taxon>Streptomyces</taxon>
    </lineage>
</organism>
<reference key="1">
    <citation type="journal article" date="2001" name="Proc. Natl. Acad. Sci. U.S.A.">
        <title>Genome sequence of an industrial microorganism Streptomyces avermitilis: deducing the ability of producing secondary metabolites.</title>
        <authorList>
            <person name="Omura S."/>
            <person name="Ikeda H."/>
            <person name="Ishikawa J."/>
            <person name="Hanamoto A."/>
            <person name="Takahashi C."/>
            <person name="Shinose M."/>
            <person name="Takahashi Y."/>
            <person name="Horikawa H."/>
            <person name="Nakazawa H."/>
            <person name="Osonoe T."/>
            <person name="Kikuchi H."/>
            <person name="Shiba T."/>
            <person name="Sakaki Y."/>
            <person name="Hattori M."/>
        </authorList>
    </citation>
    <scope>NUCLEOTIDE SEQUENCE [LARGE SCALE GENOMIC DNA]</scope>
    <source>
        <strain>ATCC 31267 / DSM 46492 / JCM 5070 / NBRC 14893 / NCIMB 12804 / NRRL 8165 / MA-4680</strain>
    </source>
</reference>
<reference key="2">
    <citation type="journal article" date="2003" name="Nat. Biotechnol.">
        <title>Complete genome sequence and comparative analysis of the industrial microorganism Streptomyces avermitilis.</title>
        <authorList>
            <person name="Ikeda H."/>
            <person name="Ishikawa J."/>
            <person name="Hanamoto A."/>
            <person name="Shinose M."/>
            <person name="Kikuchi H."/>
            <person name="Shiba T."/>
            <person name="Sakaki Y."/>
            <person name="Hattori M."/>
            <person name="Omura S."/>
        </authorList>
    </citation>
    <scope>NUCLEOTIDE SEQUENCE [LARGE SCALE GENOMIC DNA]</scope>
    <source>
        <strain>ATCC 31267 / DSM 46492 / JCM 5070 / NBRC 14893 / NCIMB 12804 / NRRL 8165 / MA-4680</strain>
    </source>
</reference>
<keyword id="KW-0021">Allosteric enzyme</keyword>
<keyword id="KW-0328">Glycosyltransferase</keyword>
<keyword id="KW-0342">GTP-binding</keyword>
<keyword id="KW-0460">Magnesium</keyword>
<keyword id="KW-0547">Nucleotide-binding</keyword>
<keyword id="KW-1185">Reference proteome</keyword>
<keyword id="KW-0808">Transferase</keyword>
<feature type="chain" id="PRO_0000120891" description="Uracil phosphoribosyltransferase">
    <location>
        <begin position="1"/>
        <end position="211"/>
    </location>
</feature>
<feature type="binding site" evidence="1">
    <location>
        <position position="78"/>
    </location>
    <ligand>
        <name>5-phospho-alpha-D-ribose 1-diphosphate</name>
        <dbReference type="ChEBI" id="CHEBI:58017"/>
    </ligand>
</feature>
<feature type="binding site" evidence="1">
    <location>
        <position position="103"/>
    </location>
    <ligand>
        <name>5-phospho-alpha-D-ribose 1-diphosphate</name>
        <dbReference type="ChEBI" id="CHEBI:58017"/>
    </ligand>
</feature>
<feature type="binding site" evidence="1">
    <location>
        <begin position="130"/>
        <end position="138"/>
    </location>
    <ligand>
        <name>5-phospho-alpha-D-ribose 1-diphosphate</name>
        <dbReference type="ChEBI" id="CHEBI:58017"/>
    </ligand>
</feature>
<feature type="binding site" evidence="1">
    <location>
        <position position="195"/>
    </location>
    <ligand>
        <name>uracil</name>
        <dbReference type="ChEBI" id="CHEBI:17568"/>
    </ligand>
</feature>
<feature type="binding site" evidence="1">
    <location>
        <begin position="200"/>
        <end position="202"/>
    </location>
    <ligand>
        <name>uracil</name>
        <dbReference type="ChEBI" id="CHEBI:17568"/>
    </ligand>
</feature>
<feature type="binding site" evidence="1">
    <location>
        <position position="201"/>
    </location>
    <ligand>
        <name>5-phospho-alpha-D-ribose 1-diphosphate</name>
        <dbReference type="ChEBI" id="CHEBI:58017"/>
    </ligand>
</feature>
<dbReference type="EC" id="2.4.2.9" evidence="1"/>
<dbReference type="EMBL" id="BA000030">
    <property type="protein sequence ID" value="BAC71890.1"/>
    <property type="molecule type" value="Genomic_DNA"/>
</dbReference>
<dbReference type="RefSeq" id="WP_010985605.1">
    <property type="nucleotide sequence ID" value="NZ_JZJK01000079.1"/>
</dbReference>
<dbReference type="SMR" id="Q82FS4"/>
<dbReference type="GeneID" id="41541257"/>
<dbReference type="KEGG" id="sma:SAVERM_4178"/>
<dbReference type="eggNOG" id="COG0035">
    <property type="taxonomic scope" value="Bacteria"/>
</dbReference>
<dbReference type="HOGENOM" id="CLU_067096_2_3_11"/>
<dbReference type="OrthoDB" id="9781675at2"/>
<dbReference type="UniPathway" id="UPA00574">
    <property type="reaction ID" value="UER00636"/>
</dbReference>
<dbReference type="Proteomes" id="UP000000428">
    <property type="component" value="Chromosome"/>
</dbReference>
<dbReference type="GO" id="GO:0005525">
    <property type="term" value="F:GTP binding"/>
    <property type="evidence" value="ECO:0007669"/>
    <property type="project" value="UniProtKB-KW"/>
</dbReference>
<dbReference type="GO" id="GO:0000287">
    <property type="term" value="F:magnesium ion binding"/>
    <property type="evidence" value="ECO:0007669"/>
    <property type="project" value="UniProtKB-UniRule"/>
</dbReference>
<dbReference type="GO" id="GO:0004845">
    <property type="term" value="F:uracil phosphoribosyltransferase activity"/>
    <property type="evidence" value="ECO:0007669"/>
    <property type="project" value="UniProtKB-UniRule"/>
</dbReference>
<dbReference type="GO" id="GO:0044206">
    <property type="term" value="P:UMP salvage"/>
    <property type="evidence" value="ECO:0007669"/>
    <property type="project" value="UniProtKB-UniRule"/>
</dbReference>
<dbReference type="GO" id="GO:0006223">
    <property type="term" value="P:uracil salvage"/>
    <property type="evidence" value="ECO:0007669"/>
    <property type="project" value="InterPro"/>
</dbReference>
<dbReference type="CDD" id="cd06223">
    <property type="entry name" value="PRTases_typeI"/>
    <property type="match status" value="1"/>
</dbReference>
<dbReference type="FunFam" id="3.40.50.2020:FF:000003">
    <property type="entry name" value="Uracil phosphoribosyltransferase"/>
    <property type="match status" value="1"/>
</dbReference>
<dbReference type="Gene3D" id="3.40.50.2020">
    <property type="match status" value="1"/>
</dbReference>
<dbReference type="HAMAP" id="MF_01218_B">
    <property type="entry name" value="Upp_B"/>
    <property type="match status" value="1"/>
</dbReference>
<dbReference type="InterPro" id="IPR000836">
    <property type="entry name" value="PRibTrfase_dom"/>
</dbReference>
<dbReference type="InterPro" id="IPR029057">
    <property type="entry name" value="PRTase-like"/>
</dbReference>
<dbReference type="InterPro" id="IPR034332">
    <property type="entry name" value="Upp_B"/>
</dbReference>
<dbReference type="InterPro" id="IPR050054">
    <property type="entry name" value="UPRTase/APRTase"/>
</dbReference>
<dbReference type="InterPro" id="IPR005765">
    <property type="entry name" value="Ura_phspho_trans"/>
</dbReference>
<dbReference type="NCBIfam" id="NF001097">
    <property type="entry name" value="PRK00129.1"/>
    <property type="match status" value="1"/>
</dbReference>
<dbReference type="NCBIfam" id="TIGR01091">
    <property type="entry name" value="upp"/>
    <property type="match status" value="1"/>
</dbReference>
<dbReference type="PANTHER" id="PTHR32315">
    <property type="entry name" value="ADENINE PHOSPHORIBOSYLTRANSFERASE"/>
    <property type="match status" value="1"/>
</dbReference>
<dbReference type="PANTHER" id="PTHR32315:SF4">
    <property type="entry name" value="URACIL PHOSPHORIBOSYLTRANSFERASE, CHLOROPLASTIC"/>
    <property type="match status" value="1"/>
</dbReference>
<dbReference type="Pfam" id="PF14681">
    <property type="entry name" value="UPRTase"/>
    <property type="match status" value="1"/>
</dbReference>
<dbReference type="SUPFAM" id="SSF53271">
    <property type="entry name" value="PRTase-like"/>
    <property type="match status" value="1"/>
</dbReference>
<sequence>MRLHVVDHPLVAHKLTTLRDQRTDSPTFRRLADELVTLLAYEATRDVRTEQVDIVTPVAPTTGVRLSHPRPLVVPILRAGLGMLDGMVRLLPTAEVGFLGMVRDEETLQASTYATRMPDDLSGRQVYVLDPMLATGGTLVAAIQELIKRGADDVTAVVLLAAPEGVEIMERDLAGTPVTVVTASVDERLNEHGYIVPGLGDAGDRMYGAAE</sequence>
<gene>
    <name evidence="1" type="primary">upp</name>
    <name type="ordered locus">SAV_4178</name>
</gene>
<comment type="function">
    <text evidence="1">Catalyzes the conversion of uracil and 5-phospho-alpha-D-ribose 1-diphosphate (PRPP) to UMP and diphosphate.</text>
</comment>
<comment type="catalytic activity">
    <reaction evidence="1">
        <text>UMP + diphosphate = 5-phospho-alpha-D-ribose 1-diphosphate + uracil</text>
        <dbReference type="Rhea" id="RHEA:13017"/>
        <dbReference type="ChEBI" id="CHEBI:17568"/>
        <dbReference type="ChEBI" id="CHEBI:33019"/>
        <dbReference type="ChEBI" id="CHEBI:57865"/>
        <dbReference type="ChEBI" id="CHEBI:58017"/>
        <dbReference type="EC" id="2.4.2.9"/>
    </reaction>
</comment>
<comment type="cofactor">
    <cofactor evidence="1">
        <name>Mg(2+)</name>
        <dbReference type="ChEBI" id="CHEBI:18420"/>
    </cofactor>
    <text evidence="1">Binds 1 Mg(2+) ion per subunit. The magnesium is bound as Mg-PRPP.</text>
</comment>
<comment type="activity regulation">
    <text evidence="1">Allosterically activated by GTP.</text>
</comment>
<comment type="pathway">
    <text evidence="1">Pyrimidine metabolism; UMP biosynthesis via salvage pathway; UMP from uracil: step 1/1.</text>
</comment>
<comment type="similarity">
    <text evidence="1">Belongs to the UPRTase family.</text>
</comment>
<accession>Q82FS4</accession>
<name>UPP_STRAW</name>
<evidence type="ECO:0000255" key="1">
    <source>
        <dbReference type="HAMAP-Rule" id="MF_01218"/>
    </source>
</evidence>
<protein>
    <recommendedName>
        <fullName evidence="1">Uracil phosphoribosyltransferase</fullName>
        <ecNumber evidence="1">2.4.2.9</ecNumber>
    </recommendedName>
    <alternativeName>
        <fullName evidence="1">UMP pyrophosphorylase</fullName>
    </alternativeName>
    <alternativeName>
        <fullName evidence="1">UPRTase</fullName>
    </alternativeName>
</protein>